<accession>A6QPI6</accession>
<sequence length="140" mass="15292">MAAAAAGPGAPLSADELLPKGDAEKPEEELEEEDDEELDETLSERLWGLTEMFPERVRSAAGATFDLSLFVAQKMYRFSRAALWIGTTSFMILVLPVVFETEKLQMEQQQQLQQRQILLGPNTGLSGGMPGALPSLPGKI</sequence>
<gene>
    <name type="primary">TOMM22</name>
</gene>
<dbReference type="EMBL" id="BC149339">
    <property type="protein sequence ID" value="AAI49340.1"/>
    <property type="molecule type" value="mRNA"/>
</dbReference>
<dbReference type="RefSeq" id="NP_001093805.1">
    <property type="nucleotide sequence ID" value="NM_001100335.1"/>
</dbReference>
<dbReference type="SMR" id="A6QPI6"/>
<dbReference type="FunCoup" id="A6QPI6">
    <property type="interactions" value="4115"/>
</dbReference>
<dbReference type="STRING" id="9913.ENSBTAP00000013405"/>
<dbReference type="PaxDb" id="9913-ENSBTAP00000013405"/>
<dbReference type="PeptideAtlas" id="A6QPI6"/>
<dbReference type="Ensembl" id="ENSBTAT00000013405.5">
    <property type="protein sequence ID" value="ENSBTAP00000013405.4"/>
    <property type="gene ID" value="ENSBTAG00000010157.5"/>
</dbReference>
<dbReference type="GeneID" id="510780"/>
<dbReference type="KEGG" id="bta:510780"/>
<dbReference type="CTD" id="56993"/>
<dbReference type="VEuPathDB" id="HostDB:ENSBTAG00000010157"/>
<dbReference type="VGNC" id="VGNC:49064">
    <property type="gene designation" value="TOMM22"/>
</dbReference>
<dbReference type="eggNOG" id="KOG4111">
    <property type="taxonomic scope" value="Eukaryota"/>
</dbReference>
<dbReference type="GeneTree" id="ENSGT00390000016475"/>
<dbReference type="HOGENOM" id="CLU_108175_1_0_1"/>
<dbReference type="InParanoid" id="A6QPI6"/>
<dbReference type="OMA" id="DKDSGME"/>
<dbReference type="OrthoDB" id="10016939at2759"/>
<dbReference type="TreeFam" id="TF106201"/>
<dbReference type="Reactome" id="R-BTA-5205685">
    <property type="pathway name" value="PINK1-PRKN Mediated Mitophagy"/>
</dbReference>
<dbReference type="Proteomes" id="UP000009136">
    <property type="component" value="Chromosome 5"/>
</dbReference>
<dbReference type="Bgee" id="ENSBTAG00000010157">
    <property type="expression patterns" value="Expressed in prostate gland and 103 other cell types or tissues"/>
</dbReference>
<dbReference type="GO" id="GO:0005742">
    <property type="term" value="C:mitochondrial outer membrane translocase complex"/>
    <property type="evidence" value="ECO:0007669"/>
    <property type="project" value="Ensembl"/>
</dbReference>
<dbReference type="GO" id="GO:0030943">
    <property type="term" value="F:mitochondrion targeting sequence binding"/>
    <property type="evidence" value="ECO:0007669"/>
    <property type="project" value="Ensembl"/>
</dbReference>
<dbReference type="GO" id="GO:0045040">
    <property type="term" value="P:protein insertion into mitochondrial outer membrane"/>
    <property type="evidence" value="ECO:0007669"/>
    <property type="project" value="Ensembl"/>
</dbReference>
<dbReference type="GO" id="GO:0006626">
    <property type="term" value="P:protein targeting to mitochondrion"/>
    <property type="evidence" value="ECO:0000250"/>
    <property type="project" value="UniProtKB"/>
</dbReference>
<dbReference type="CDD" id="cd22884">
    <property type="entry name" value="TOM22"/>
    <property type="match status" value="1"/>
</dbReference>
<dbReference type="InterPro" id="IPR005683">
    <property type="entry name" value="Tom22"/>
</dbReference>
<dbReference type="PANTHER" id="PTHR12504">
    <property type="entry name" value="MITOCHONDRIAL IMPORT RECEPTOR SUBUNIT TOM22"/>
    <property type="match status" value="1"/>
</dbReference>
<dbReference type="PANTHER" id="PTHR12504:SF0">
    <property type="entry name" value="MITOCHONDRIAL IMPORT RECEPTOR SUBUNIT TOM22 HOMOLOG"/>
    <property type="match status" value="1"/>
</dbReference>
<dbReference type="Pfam" id="PF04281">
    <property type="entry name" value="Tom22"/>
    <property type="match status" value="1"/>
</dbReference>
<reference key="1">
    <citation type="submission" date="2007-07" db="EMBL/GenBank/DDBJ databases">
        <authorList>
            <consortium name="NIH - Mammalian Gene Collection (MGC) project"/>
        </authorList>
    </citation>
    <scope>NUCLEOTIDE SEQUENCE [LARGE SCALE MRNA]</scope>
    <source>
        <strain>Hereford</strain>
        <tissue>Fetal brain</tissue>
    </source>
</reference>
<organism>
    <name type="scientific">Bos taurus</name>
    <name type="common">Bovine</name>
    <dbReference type="NCBI Taxonomy" id="9913"/>
    <lineage>
        <taxon>Eukaryota</taxon>
        <taxon>Metazoa</taxon>
        <taxon>Chordata</taxon>
        <taxon>Craniata</taxon>
        <taxon>Vertebrata</taxon>
        <taxon>Euteleostomi</taxon>
        <taxon>Mammalia</taxon>
        <taxon>Eutheria</taxon>
        <taxon>Laurasiatheria</taxon>
        <taxon>Artiodactyla</taxon>
        <taxon>Ruminantia</taxon>
        <taxon>Pecora</taxon>
        <taxon>Bovidae</taxon>
        <taxon>Bovinae</taxon>
        <taxon>Bos</taxon>
    </lineage>
</organism>
<feature type="chain" id="PRO_0000370709" description="Mitochondrial import receptor subunit TOM22 homolog">
    <location>
        <begin position="1"/>
        <end position="140"/>
    </location>
</feature>
<feature type="topological domain" description="Cytoplasmic" evidence="5">
    <location>
        <begin position="1"/>
        <end position="81"/>
    </location>
</feature>
<feature type="transmembrane region" description="Helical" evidence="5">
    <location>
        <begin position="82"/>
        <end position="101"/>
    </location>
</feature>
<feature type="topological domain" description="Mitochondrial intermembrane" evidence="5">
    <location>
        <begin position="102"/>
        <end position="140"/>
    </location>
</feature>
<feature type="region of interest" description="Disordered" evidence="6">
    <location>
        <begin position="1"/>
        <end position="40"/>
    </location>
</feature>
<feature type="region of interest" description="Import sequence; necessary for mitochondrion outer membrane localization and integration in the TOM complex" evidence="1">
    <location>
        <begin position="39"/>
        <end position="48"/>
    </location>
</feature>
<feature type="region of interest" description="TMD; necessary for mitochondrion outer membrane localization and integration in the TOM complex" evidence="1">
    <location>
        <begin position="81"/>
        <end position="101"/>
    </location>
</feature>
<feature type="region of interest" description="C-tail signal; necessary for mitochondrion outer membrane localization and integration in the TOM complex" evidence="1">
    <location>
        <begin position="121"/>
        <end position="140"/>
    </location>
</feature>
<feature type="compositionally biased region" description="Low complexity" evidence="6">
    <location>
        <begin position="1"/>
        <end position="11"/>
    </location>
</feature>
<feature type="compositionally biased region" description="Acidic residues" evidence="6">
    <location>
        <begin position="25"/>
        <end position="40"/>
    </location>
</feature>
<feature type="modified residue" description="Phosphoserine" evidence="4">
    <location>
        <position position="13"/>
    </location>
</feature>
<feature type="modified residue" description="Phosphothreonine" evidence="4">
    <location>
        <position position="41"/>
    </location>
</feature>
<feature type="modified residue" description="Phosphoserine" evidence="3">
    <location>
        <position position="43"/>
    </location>
</feature>
<evidence type="ECO:0000250" key="1"/>
<evidence type="ECO:0000250" key="2">
    <source>
        <dbReference type="UniProtKB" id="Q75Q41"/>
    </source>
</evidence>
<evidence type="ECO:0000250" key="3">
    <source>
        <dbReference type="UniProtKB" id="Q9CPQ3"/>
    </source>
</evidence>
<evidence type="ECO:0000250" key="4">
    <source>
        <dbReference type="UniProtKB" id="Q9NS69"/>
    </source>
</evidence>
<evidence type="ECO:0000255" key="5"/>
<evidence type="ECO:0000256" key="6">
    <source>
        <dbReference type="SAM" id="MobiDB-lite"/>
    </source>
</evidence>
<evidence type="ECO:0000305" key="7"/>
<keyword id="KW-0472">Membrane</keyword>
<keyword id="KW-0496">Mitochondrion</keyword>
<keyword id="KW-1000">Mitochondrion outer membrane</keyword>
<keyword id="KW-0597">Phosphoprotein</keyword>
<keyword id="KW-0653">Protein transport</keyword>
<keyword id="KW-0675">Receptor</keyword>
<keyword id="KW-1185">Reference proteome</keyword>
<keyword id="KW-0811">Translocation</keyword>
<keyword id="KW-0812">Transmembrane</keyword>
<keyword id="KW-1133">Transmembrane helix</keyword>
<keyword id="KW-0813">Transport</keyword>
<comment type="function">
    <text evidence="2 4">Central receptor component of the translocase of the outer membrane of mitochondria (TOM complex) responsible for the recognition and translocation of cytosolically synthesized mitochondrial preproteins. Together with the peripheral receptor TOM20 functions as the transit peptide receptor and facilitates the movement of preproteins into the translocation pore (By similarity). Required for the translocation across the mitochondrial outer membrane of cytochrome P450 monooxygenases (By similarity).</text>
</comment>
<comment type="subunit">
    <text evidence="1">Forms part of the preprotein translocase complex of the outer mitochondrial membrane (TOM complex) which consists of at least 7 different proteins (TOMM5, TOMM6, TOMM7, TOMM20, TOMM22, TOMM40 and TOMM70). Interacts with PPP2R2B and TOMM40 (By similarity).</text>
</comment>
<comment type="subcellular location">
    <subcellularLocation>
        <location evidence="1">Mitochondrion outer membrane</location>
        <topology evidence="1">Single-pass membrane protein</topology>
    </subcellularLocation>
</comment>
<comment type="domain">
    <text evidence="1">The N-terminal domain (residues 1-60) is important for binding to the unfolded mature imported proteins. Residues (47-69) of the cytoplasmic domain interacts with TOMM20 while the C-terminal segment (residues 61-80) binds presequence of preproteins. Requires the transmembrane domain (TMD), a short segment (the import sequence) in the cytoplasmic domain localizing separately from the TMD and the C-tail signal in the C-terminal domain for efficient targeting and integration into the TOM complex (By similarity).</text>
</comment>
<comment type="similarity">
    <text evidence="7">Belongs to the Tom22 family.</text>
</comment>
<name>TOM22_BOVIN</name>
<proteinExistence type="evidence at transcript level"/>
<protein>
    <recommendedName>
        <fullName>Mitochondrial import receptor subunit TOM22 homolog</fullName>
    </recommendedName>
    <alternativeName>
        <fullName>Translocase of outer membrane 22 kDa subunit homolog</fullName>
    </alternativeName>
</protein>